<name>RL15_JANSC</name>
<comment type="function">
    <text evidence="1">Binds to the 23S rRNA.</text>
</comment>
<comment type="subunit">
    <text evidence="1">Part of the 50S ribosomal subunit.</text>
</comment>
<comment type="similarity">
    <text evidence="1">Belongs to the universal ribosomal protein uL15 family.</text>
</comment>
<evidence type="ECO:0000255" key="1">
    <source>
        <dbReference type="HAMAP-Rule" id="MF_01341"/>
    </source>
</evidence>
<evidence type="ECO:0000256" key="2">
    <source>
        <dbReference type="SAM" id="MobiDB-lite"/>
    </source>
</evidence>
<evidence type="ECO:0000305" key="3"/>
<protein>
    <recommendedName>
        <fullName evidence="1">Large ribosomal subunit protein uL15</fullName>
    </recommendedName>
    <alternativeName>
        <fullName evidence="3">50S ribosomal protein L15</fullName>
    </alternativeName>
</protein>
<keyword id="KW-1185">Reference proteome</keyword>
<keyword id="KW-0687">Ribonucleoprotein</keyword>
<keyword id="KW-0689">Ribosomal protein</keyword>
<keyword id="KW-0694">RNA-binding</keyword>
<keyword id="KW-0699">rRNA-binding</keyword>
<feature type="chain" id="PRO_0000251520" description="Large ribosomal subunit protein uL15">
    <location>
        <begin position="1"/>
        <end position="157"/>
    </location>
</feature>
<feature type="region of interest" description="Disordered" evidence="2">
    <location>
        <begin position="1"/>
        <end position="41"/>
    </location>
</feature>
<feature type="compositionally biased region" description="Gly residues" evidence="2">
    <location>
        <begin position="21"/>
        <end position="35"/>
    </location>
</feature>
<proteinExistence type="inferred from homology"/>
<reference key="1">
    <citation type="submission" date="2006-02" db="EMBL/GenBank/DDBJ databases">
        <title>Complete sequence of chromosome of Jannaschia sp. CCS1.</title>
        <authorList>
            <consortium name="US DOE Joint Genome Institute"/>
            <person name="Copeland A."/>
            <person name="Lucas S."/>
            <person name="Lapidus A."/>
            <person name="Barry K."/>
            <person name="Detter J.C."/>
            <person name="Glavina del Rio T."/>
            <person name="Hammon N."/>
            <person name="Israni S."/>
            <person name="Pitluck S."/>
            <person name="Brettin T."/>
            <person name="Bruce D."/>
            <person name="Han C."/>
            <person name="Tapia R."/>
            <person name="Gilna P."/>
            <person name="Chertkov O."/>
            <person name="Saunders E."/>
            <person name="Schmutz J."/>
            <person name="Larimer F."/>
            <person name="Land M."/>
            <person name="Kyrpides N."/>
            <person name="Lykidis A."/>
            <person name="Moran M.A."/>
            <person name="Belas R."/>
            <person name="Ye W."/>
            <person name="Buchan A."/>
            <person name="Gonzalez J.M."/>
            <person name="Schell M.A."/>
            <person name="Richardson P."/>
        </authorList>
    </citation>
    <scope>NUCLEOTIDE SEQUENCE [LARGE SCALE GENOMIC DNA]</scope>
    <source>
        <strain>CCS1</strain>
    </source>
</reference>
<gene>
    <name evidence="1" type="primary">rplO</name>
    <name type="ordered locus">Jann_0611</name>
</gene>
<dbReference type="EMBL" id="CP000264">
    <property type="protein sequence ID" value="ABD53528.1"/>
    <property type="molecule type" value="Genomic_DNA"/>
</dbReference>
<dbReference type="RefSeq" id="WP_011453736.1">
    <property type="nucleotide sequence ID" value="NC_007802.1"/>
</dbReference>
<dbReference type="SMR" id="Q28UT4"/>
<dbReference type="STRING" id="290400.Jann_0611"/>
<dbReference type="KEGG" id="jan:Jann_0611"/>
<dbReference type="eggNOG" id="COG0200">
    <property type="taxonomic scope" value="Bacteria"/>
</dbReference>
<dbReference type="HOGENOM" id="CLU_055188_4_0_5"/>
<dbReference type="OrthoDB" id="9810293at2"/>
<dbReference type="Proteomes" id="UP000008326">
    <property type="component" value="Chromosome"/>
</dbReference>
<dbReference type="GO" id="GO:0015934">
    <property type="term" value="C:large ribosomal subunit"/>
    <property type="evidence" value="ECO:0007669"/>
    <property type="project" value="InterPro"/>
</dbReference>
<dbReference type="GO" id="GO:0019843">
    <property type="term" value="F:rRNA binding"/>
    <property type="evidence" value="ECO:0007669"/>
    <property type="project" value="UniProtKB-UniRule"/>
</dbReference>
<dbReference type="GO" id="GO:0003735">
    <property type="term" value="F:structural constituent of ribosome"/>
    <property type="evidence" value="ECO:0007669"/>
    <property type="project" value="InterPro"/>
</dbReference>
<dbReference type="GO" id="GO:0006412">
    <property type="term" value="P:translation"/>
    <property type="evidence" value="ECO:0007669"/>
    <property type="project" value="UniProtKB-UniRule"/>
</dbReference>
<dbReference type="Gene3D" id="3.100.10.10">
    <property type="match status" value="1"/>
</dbReference>
<dbReference type="HAMAP" id="MF_01341">
    <property type="entry name" value="Ribosomal_uL15"/>
    <property type="match status" value="1"/>
</dbReference>
<dbReference type="InterPro" id="IPR030878">
    <property type="entry name" value="Ribosomal_uL15"/>
</dbReference>
<dbReference type="InterPro" id="IPR021131">
    <property type="entry name" value="Ribosomal_uL15/eL18"/>
</dbReference>
<dbReference type="InterPro" id="IPR036227">
    <property type="entry name" value="Ribosomal_uL15/eL18_sf"/>
</dbReference>
<dbReference type="InterPro" id="IPR005749">
    <property type="entry name" value="Ribosomal_uL15_bac-type"/>
</dbReference>
<dbReference type="InterPro" id="IPR001196">
    <property type="entry name" value="Ribosomal_uL15_CS"/>
</dbReference>
<dbReference type="NCBIfam" id="TIGR01071">
    <property type="entry name" value="rplO_bact"/>
    <property type="match status" value="1"/>
</dbReference>
<dbReference type="PANTHER" id="PTHR12934">
    <property type="entry name" value="50S RIBOSOMAL PROTEIN L15"/>
    <property type="match status" value="1"/>
</dbReference>
<dbReference type="PANTHER" id="PTHR12934:SF11">
    <property type="entry name" value="LARGE RIBOSOMAL SUBUNIT PROTEIN UL15M"/>
    <property type="match status" value="1"/>
</dbReference>
<dbReference type="Pfam" id="PF00828">
    <property type="entry name" value="Ribosomal_L27A"/>
    <property type="match status" value="1"/>
</dbReference>
<dbReference type="SUPFAM" id="SSF52080">
    <property type="entry name" value="Ribosomal proteins L15p and L18e"/>
    <property type="match status" value="1"/>
</dbReference>
<dbReference type="PROSITE" id="PS00475">
    <property type="entry name" value="RIBOSOMAL_L15"/>
    <property type="match status" value="1"/>
</dbReference>
<sequence>MKLHELSDNPGATKKRKRVGRGPGSGTGKMGGRGIKGQKSRSGVAINAYEGGQMPLYQRLPKRGFNKPNRKKFAVVNLGLIQKFIDAGKLDGKADITEDALVASGLVRRKLDGVRVLAKGDVSGKLNITVTGASKAAIDAVSAAGGALTVSAPAAAE</sequence>
<accession>Q28UT4</accession>
<organism>
    <name type="scientific">Jannaschia sp. (strain CCS1)</name>
    <dbReference type="NCBI Taxonomy" id="290400"/>
    <lineage>
        <taxon>Bacteria</taxon>
        <taxon>Pseudomonadati</taxon>
        <taxon>Pseudomonadota</taxon>
        <taxon>Alphaproteobacteria</taxon>
        <taxon>Rhodobacterales</taxon>
        <taxon>Roseobacteraceae</taxon>
        <taxon>Jannaschia</taxon>
    </lineage>
</organism>